<keyword id="KW-0012">Acyltransferase</keyword>
<keyword id="KW-0256">Endoplasmic reticulum</keyword>
<keyword id="KW-0449">Lipoprotein</keyword>
<keyword id="KW-0472">Membrane</keyword>
<keyword id="KW-0564">Palmitate</keyword>
<keyword id="KW-1185">Reference proteome</keyword>
<keyword id="KW-0808">Transferase</keyword>
<keyword id="KW-0812">Transmembrane</keyword>
<keyword id="KW-1133">Transmembrane helix</keyword>
<accession>Q4PE27</accession>
<accession>A0A0D1E7T6</accession>
<dbReference type="EC" id="2.3.1.225" evidence="1"/>
<dbReference type="EMBL" id="CM003142">
    <property type="protein sequence ID" value="KIS70460.1"/>
    <property type="molecule type" value="Genomic_DNA"/>
</dbReference>
<dbReference type="RefSeq" id="XP_011388014.1">
    <property type="nucleotide sequence ID" value="XM_011389712.1"/>
</dbReference>
<dbReference type="SMR" id="Q4PE27"/>
<dbReference type="EnsemblFungi" id="KIS70460">
    <property type="protein sequence ID" value="KIS70460"/>
    <property type="gene ID" value="UMAG_11136"/>
</dbReference>
<dbReference type="GeneID" id="23567056"/>
<dbReference type="KEGG" id="uma:UMAG_11136"/>
<dbReference type="VEuPathDB" id="FungiDB:UMAG_11136"/>
<dbReference type="eggNOG" id="KOG1315">
    <property type="taxonomic scope" value="Eukaryota"/>
</dbReference>
<dbReference type="HOGENOM" id="CLU_027721_9_0_1"/>
<dbReference type="InParanoid" id="Q4PE27"/>
<dbReference type="OrthoDB" id="331948at2759"/>
<dbReference type="Proteomes" id="UP000000561">
    <property type="component" value="Chromosome 3"/>
</dbReference>
<dbReference type="GO" id="GO:0005783">
    <property type="term" value="C:endoplasmic reticulum"/>
    <property type="evidence" value="ECO:0000318"/>
    <property type="project" value="GO_Central"/>
</dbReference>
<dbReference type="GO" id="GO:0005789">
    <property type="term" value="C:endoplasmic reticulum membrane"/>
    <property type="evidence" value="ECO:0007669"/>
    <property type="project" value="UniProtKB-SubCell"/>
</dbReference>
<dbReference type="GO" id="GO:0005794">
    <property type="term" value="C:Golgi apparatus"/>
    <property type="evidence" value="ECO:0000318"/>
    <property type="project" value="GO_Central"/>
</dbReference>
<dbReference type="GO" id="GO:0019706">
    <property type="term" value="F:protein-cysteine S-palmitoyltransferase activity"/>
    <property type="evidence" value="ECO:0000318"/>
    <property type="project" value="GO_Central"/>
</dbReference>
<dbReference type="GO" id="GO:0006612">
    <property type="term" value="P:protein targeting to membrane"/>
    <property type="evidence" value="ECO:0000318"/>
    <property type="project" value="GO_Central"/>
</dbReference>
<dbReference type="HAMAP" id="MF_03199">
    <property type="entry name" value="DHHC_PAT_PFA4"/>
    <property type="match status" value="1"/>
</dbReference>
<dbReference type="InterPro" id="IPR001594">
    <property type="entry name" value="Palmitoyltrfase_DHHC"/>
</dbReference>
<dbReference type="InterPro" id="IPR033682">
    <property type="entry name" value="PFA4"/>
</dbReference>
<dbReference type="InterPro" id="IPR039859">
    <property type="entry name" value="PFA4/ZDH16/20/ERF2-like"/>
</dbReference>
<dbReference type="PANTHER" id="PTHR12246">
    <property type="entry name" value="PALMITOYLTRANSFERASE ZDHHC16"/>
    <property type="match status" value="1"/>
</dbReference>
<dbReference type="Pfam" id="PF01529">
    <property type="entry name" value="DHHC"/>
    <property type="match status" value="1"/>
</dbReference>
<dbReference type="PROSITE" id="PS50216">
    <property type="entry name" value="DHHC"/>
    <property type="match status" value="1"/>
</dbReference>
<comment type="function">
    <text evidence="1">Mediates the reversible addition of palmitate to target proteins, thereby regulating their membrane association and biological function.</text>
</comment>
<comment type="catalytic activity">
    <reaction evidence="1">
        <text>L-cysteinyl-[protein] + hexadecanoyl-CoA = S-hexadecanoyl-L-cysteinyl-[protein] + CoA</text>
        <dbReference type="Rhea" id="RHEA:36683"/>
        <dbReference type="Rhea" id="RHEA-COMP:10131"/>
        <dbReference type="Rhea" id="RHEA-COMP:11032"/>
        <dbReference type="ChEBI" id="CHEBI:29950"/>
        <dbReference type="ChEBI" id="CHEBI:57287"/>
        <dbReference type="ChEBI" id="CHEBI:57379"/>
        <dbReference type="ChEBI" id="CHEBI:74151"/>
        <dbReference type="EC" id="2.3.1.225"/>
    </reaction>
</comment>
<comment type="subcellular location">
    <subcellularLocation>
        <location evidence="1">Endoplasmic reticulum membrane</location>
        <topology evidence="1">Multi-pass membrane protein</topology>
    </subcellularLocation>
</comment>
<comment type="domain">
    <text evidence="1">The DHHC domain is required for palmitoyltransferase activity.</text>
</comment>
<comment type="similarity">
    <text evidence="1">Belongs to the DHHC palmitoyltransferase family. PFA4 subfamily.</text>
</comment>
<sequence>MTNQDPDDGAYPSSQSDDDGIEALAINRQSRPLLAYEDQAAGQSDAFTDRDIPASTAPLTGRRRTPLSWTEVIWVSLTLLLIAVLGYSSQLYVMLPYYEKTPSFSPQALAAVLVPFNLGLLAIYYNYWLCVTTDAGSVPAGWQPEWSALEPVASLAELEHLHLVAEEEPSLELKQAIYRPRYCKTCSAFKPPRSHHCKTCQRCVLRMDHHCPWLANCVGHFNHAHFIRFLFYVDVTCLYHLIMISCRVLDSFNSYTYWREPCARELVWLVVNYALCIPVILLVGIFSLYHFYCLAVNQTTIESWEKDRTATMIRRGRVRKVKYPYDLGLWRNVRQVLGASPLVWCLPGAGARMAGDGLKYPVANGLDSGSQYRWPPKDPSRPHPSRRTWASSSSPFTYPERSNPILDPTLSTRFPHNSSPSSSDSHSSLHLPHPPSLLDPLPHHFDPPHDPDTQPVNCPKRVSVRRGSEGYEVRPHTPWSV</sequence>
<proteinExistence type="inferred from homology"/>
<feature type="chain" id="PRO_0000212970" description="Palmitoyltransferase PFA4">
    <location>
        <begin position="1"/>
        <end position="481"/>
    </location>
</feature>
<feature type="topological domain" description="Cytoplasmic" evidence="1">
    <location>
        <begin position="1"/>
        <end position="66"/>
    </location>
</feature>
<feature type="transmembrane region" description="Helical" evidence="1">
    <location>
        <begin position="67"/>
        <end position="87"/>
    </location>
</feature>
<feature type="topological domain" description="Lumenal" evidence="1">
    <location>
        <begin position="88"/>
        <end position="108"/>
    </location>
</feature>
<feature type="transmembrane region" description="Helical" evidence="1">
    <location>
        <begin position="109"/>
        <end position="129"/>
    </location>
</feature>
<feature type="topological domain" description="Cytoplasmic" evidence="1">
    <location>
        <begin position="130"/>
        <end position="223"/>
    </location>
</feature>
<feature type="transmembrane region" description="Helical" evidence="1">
    <location>
        <begin position="224"/>
        <end position="244"/>
    </location>
</feature>
<feature type="topological domain" description="Lumenal" evidence="1">
    <location>
        <begin position="245"/>
        <end position="265"/>
    </location>
</feature>
<feature type="transmembrane region" description="Helical" evidence="1">
    <location>
        <begin position="266"/>
        <end position="286"/>
    </location>
</feature>
<feature type="topological domain" description="Cytoplasmic" evidence="1">
    <location>
        <begin position="287"/>
        <end position="481"/>
    </location>
</feature>
<feature type="domain" description="DHHC" evidence="2">
    <location>
        <begin position="181"/>
        <end position="231"/>
    </location>
</feature>
<feature type="region of interest" description="Disordered" evidence="3">
    <location>
        <begin position="1"/>
        <end position="22"/>
    </location>
</feature>
<feature type="region of interest" description="Disordered" evidence="3">
    <location>
        <begin position="370"/>
        <end position="481"/>
    </location>
</feature>
<feature type="compositionally biased region" description="Low complexity" evidence="3">
    <location>
        <begin position="418"/>
        <end position="431"/>
    </location>
</feature>
<feature type="compositionally biased region" description="Basic and acidic residues" evidence="3">
    <location>
        <begin position="441"/>
        <end position="452"/>
    </location>
</feature>
<feature type="compositionally biased region" description="Basic and acidic residues" evidence="3">
    <location>
        <begin position="466"/>
        <end position="475"/>
    </location>
</feature>
<feature type="active site" description="S-palmitoyl cysteine intermediate" evidence="1">
    <location>
        <position position="211"/>
    </location>
</feature>
<gene>
    <name evidence="1" type="primary">PFA4</name>
    <name type="ORF">UMAG_11136</name>
</gene>
<protein>
    <recommendedName>
        <fullName evidence="1">Palmitoyltransferase PFA4</fullName>
        <ecNumber evidence="1">2.3.1.225</ecNumber>
    </recommendedName>
    <alternativeName>
        <fullName evidence="1">Protein S-acyltransferase</fullName>
        <shortName evidence="1">PAT</shortName>
    </alternativeName>
    <alternativeName>
        <fullName evidence="1">Protein fatty acyltransferase 4</fullName>
    </alternativeName>
</protein>
<reference key="1">
    <citation type="journal article" date="2006" name="Nature">
        <title>Insights from the genome of the biotrophic fungal plant pathogen Ustilago maydis.</title>
        <authorList>
            <person name="Kaemper J."/>
            <person name="Kahmann R."/>
            <person name="Boelker M."/>
            <person name="Ma L.-J."/>
            <person name="Brefort T."/>
            <person name="Saville B.J."/>
            <person name="Banuett F."/>
            <person name="Kronstad J.W."/>
            <person name="Gold S.E."/>
            <person name="Mueller O."/>
            <person name="Perlin M.H."/>
            <person name="Woesten H.A.B."/>
            <person name="de Vries R."/>
            <person name="Ruiz-Herrera J."/>
            <person name="Reynaga-Pena C.G."/>
            <person name="Snetselaar K."/>
            <person name="McCann M."/>
            <person name="Perez-Martin J."/>
            <person name="Feldbruegge M."/>
            <person name="Basse C.W."/>
            <person name="Steinberg G."/>
            <person name="Ibeas J.I."/>
            <person name="Holloman W."/>
            <person name="Guzman P."/>
            <person name="Farman M.L."/>
            <person name="Stajich J.E."/>
            <person name="Sentandreu R."/>
            <person name="Gonzalez-Prieto J.M."/>
            <person name="Kennell J.C."/>
            <person name="Molina L."/>
            <person name="Schirawski J."/>
            <person name="Mendoza-Mendoza A."/>
            <person name="Greilinger D."/>
            <person name="Muench K."/>
            <person name="Roessel N."/>
            <person name="Scherer M."/>
            <person name="Vranes M."/>
            <person name="Ladendorf O."/>
            <person name="Vincon V."/>
            <person name="Fuchs U."/>
            <person name="Sandrock B."/>
            <person name="Meng S."/>
            <person name="Ho E.C.H."/>
            <person name="Cahill M.J."/>
            <person name="Boyce K.J."/>
            <person name="Klose J."/>
            <person name="Klosterman S.J."/>
            <person name="Deelstra H.J."/>
            <person name="Ortiz-Castellanos L."/>
            <person name="Li W."/>
            <person name="Sanchez-Alonso P."/>
            <person name="Schreier P.H."/>
            <person name="Haeuser-Hahn I."/>
            <person name="Vaupel M."/>
            <person name="Koopmann E."/>
            <person name="Friedrich G."/>
            <person name="Voss H."/>
            <person name="Schlueter T."/>
            <person name="Margolis J."/>
            <person name="Platt D."/>
            <person name="Swimmer C."/>
            <person name="Gnirke A."/>
            <person name="Chen F."/>
            <person name="Vysotskaia V."/>
            <person name="Mannhaupt G."/>
            <person name="Gueldener U."/>
            <person name="Muensterkoetter M."/>
            <person name="Haase D."/>
            <person name="Oesterheld M."/>
            <person name="Mewes H.-W."/>
            <person name="Mauceli E.W."/>
            <person name="DeCaprio D."/>
            <person name="Wade C.M."/>
            <person name="Butler J."/>
            <person name="Young S.K."/>
            <person name="Jaffe D.B."/>
            <person name="Calvo S.E."/>
            <person name="Nusbaum C."/>
            <person name="Galagan J.E."/>
            <person name="Birren B.W."/>
        </authorList>
    </citation>
    <scope>NUCLEOTIDE SEQUENCE [LARGE SCALE GENOMIC DNA]</scope>
    <source>
        <strain>DSM 14603 / FGSC 9021 / UM521</strain>
    </source>
</reference>
<reference key="2">
    <citation type="submission" date="2014-09" db="EMBL/GenBank/DDBJ databases">
        <authorList>
            <person name="Gueldener U."/>
            <person name="Muensterkoetter M."/>
            <person name="Walter M.C."/>
            <person name="Mannhaupt G."/>
            <person name="Kahmann R."/>
        </authorList>
    </citation>
    <scope>GENOME REANNOTATION</scope>
    <source>
        <strain>DSM 14603 / FGSC 9021 / UM521</strain>
    </source>
</reference>
<organism>
    <name type="scientific">Mycosarcoma maydis</name>
    <name type="common">Corn smut fungus</name>
    <name type="synonym">Ustilago maydis</name>
    <dbReference type="NCBI Taxonomy" id="5270"/>
    <lineage>
        <taxon>Eukaryota</taxon>
        <taxon>Fungi</taxon>
        <taxon>Dikarya</taxon>
        <taxon>Basidiomycota</taxon>
        <taxon>Ustilaginomycotina</taxon>
        <taxon>Ustilaginomycetes</taxon>
        <taxon>Ustilaginales</taxon>
        <taxon>Ustilaginaceae</taxon>
        <taxon>Mycosarcoma</taxon>
    </lineage>
</organism>
<name>PFA4_MYCMD</name>
<evidence type="ECO:0000255" key="1">
    <source>
        <dbReference type="HAMAP-Rule" id="MF_03199"/>
    </source>
</evidence>
<evidence type="ECO:0000255" key="2">
    <source>
        <dbReference type="PROSITE-ProRule" id="PRU00067"/>
    </source>
</evidence>
<evidence type="ECO:0000256" key="3">
    <source>
        <dbReference type="SAM" id="MobiDB-lite"/>
    </source>
</evidence>